<reference key="1">
    <citation type="journal article" date="2009" name="J. Bacteriol.">
        <title>Complete genome sequence and comparative genome analysis of enteropathogenic Escherichia coli O127:H6 strain E2348/69.</title>
        <authorList>
            <person name="Iguchi A."/>
            <person name="Thomson N.R."/>
            <person name="Ogura Y."/>
            <person name="Saunders D."/>
            <person name="Ooka T."/>
            <person name="Henderson I.R."/>
            <person name="Harris D."/>
            <person name="Asadulghani M."/>
            <person name="Kurokawa K."/>
            <person name="Dean P."/>
            <person name="Kenny B."/>
            <person name="Quail M.A."/>
            <person name="Thurston S."/>
            <person name="Dougan G."/>
            <person name="Hayashi T."/>
            <person name="Parkhill J."/>
            <person name="Frankel G."/>
        </authorList>
    </citation>
    <scope>NUCLEOTIDE SEQUENCE [LARGE SCALE GENOMIC DNA]</scope>
    <source>
        <strain>E2348/69 / EPEC</strain>
    </source>
</reference>
<protein>
    <recommendedName>
        <fullName evidence="1">Allantoinase</fullName>
        <ecNumber evidence="1">3.5.2.5</ecNumber>
    </recommendedName>
    <alternativeName>
        <fullName evidence="1">Allantoin-utilizing enzyme</fullName>
    </alternativeName>
</protein>
<sequence>MSFDLIIKNGTVILENEARVVDIAVKDGKIAAIGQDLGDAKDVMDASGLVVSPGMVDAHTHISEPGRSHWEGYETGTRAAAKGGITTMIEMPLNQLPATVDRASIELKFDAAKGKLTIDAAQLGGLVSYNIDRLHELDEVGVVGFKCFVATCGDRGIDNDFRDVNDWQFFKGAQKLGELGQPVLVHCENALICDALGEEAKREGRVTAHDYVASRPVFTEVEAIRRVLYLAKVAGCRLHVCHVSSPEGVEEVTRARQEGQDVTCESCPHYFVLDTDQFEEIGTLAKCSPPIRDLENQKGMWEKLFNGEIDCLVSDHSPCPPEMKAGNIMKAWGGIAGLQSCMDVMFDEAVQKRGMSLPMFGKLMATNAADIFGLQQKGRIAPGKDADFVFIQPNSSYVLTNDDLEYRHKVSPYVGRTIGARITKTILRGDVIYDIEQGFPVAPKGQFILKHQQ</sequence>
<dbReference type="EC" id="3.5.2.5" evidence="1"/>
<dbReference type="EMBL" id="FM180568">
    <property type="protein sequence ID" value="CAS07993.1"/>
    <property type="molecule type" value="Genomic_DNA"/>
</dbReference>
<dbReference type="RefSeq" id="WP_000006873.1">
    <property type="nucleotide sequence ID" value="NC_011601.1"/>
</dbReference>
<dbReference type="SMR" id="B7UKI9"/>
<dbReference type="KEGG" id="ecg:E2348C_0445"/>
<dbReference type="HOGENOM" id="CLU_015572_4_2_6"/>
<dbReference type="UniPathway" id="UPA00395">
    <property type="reaction ID" value="UER00653"/>
</dbReference>
<dbReference type="Proteomes" id="UP000008205">
    <property type="component" value="Chromosome"/>
</dbReference>
<dbReference type="GO" id="GO:0005737">
    <property type="term" value="C:cytoplasm"/>
    <property type="evidence" value="ECO:0007669"/>
    <property type="project" value="TreeGrafter"/>
</dbReference>
<dbReference type="GO" id="GO:0004038">
    <property type="term" value="F:allantoinase activity"/>
    <property type="evidence" value="ECO:0007669"/>
    <property type="project" value="UniProtKB-UniRule"/>
</dbReference>
<dbReference type="GO" id="GO:0050897">
    <property type="term" value="F:cobalt ion binding"/>
    <property type="evidence" value="ECO:0007669"/>
    <property type="project" value="InterPro"/>
</dbReference>
<dbReference type="GO" id="GO:0008270">
    <property type="term" value="F:zinc ion binding"/>
    <property type="evidence" value="ECO:0007669"/>
    <property type="project" value="InterPro"/>
</dbReference>
<dbReference type="GO" id="GO:0000256">
    <property type="term" value="P:allantoin catabolic process"/>
    <property type="evidence" value="ECO:0007669"/>
    <property type="project" value="UniProtKB-UniRule"/>
</dbReference>
<dbReference type="GO" id="GO:0006145">
    <property type="term" value="P:purine nucleobase catabolic process"/>
    <property type="evidence" value="ECO:0007669"/>
    <property type="project" value="TreeGrafter"/>
</dbReference>
<dbReference type="CDD" id="cd01315">
    <property type="entry name" value="L-HYD_ALN"/>
    <property type="match status" value="1"/>
</dbReference>
<dbReference type="FunFam" id="3.20.20.140:FF:000013">
    <property type="entry name" value="Allantoinase"/>
    <property type="match status" value="1"/>
</dbReference>
<dbReference type="Gene3D" id="3.20.20.140">
    <property type="entry name" value="Metal-dependent hydrolases"/>
    <property type="match status" value="1"/>
</dbReference>
<dbReference type="Gene3D" id="2.30.40.10">
    <property type="entry name" value="Urease, subunit C, domain 1"/>
    <property type="match status" value="1"/>
</dbReference>
<dbReference type="HAMAP" id="MF_01645">
    <property type="entry name" value="Hydantoinase"/>
    <property type="match status" value="1"/>
</dbReference>
<dbReference type="InterPro" id="IPR017593">
    <property type="entry name" value="Allantoinase"/>
</dbReference>
<dbReference type="InterPro" id="IPR047604">
    <property type="entry name" value="Allantoinase_bact"/>
</dbReference>
<dbReference type="InterPro" id="IPR006680">
    <property type="entry name" value="Amidohydro-rel"/>
</dbReference>
<dbReference type="InterPro" id="IPR050138">
    <property type="entry name" value="DHOase/Allantoinase_Hydrolase"/>
</dbReference>
<dbReference type="InterPro" id="IPR011059">
    <property type="entry name" value="Metal-dep_hydrolase_composite"/>
</dbReference>
<dbReference type="InterPro" id="IPR032466">
    <property type="entry name" value="Metal_Hydrolase"/>
</dbReference>
<dbReference type="NCBIfam" id="TIGR03178">
    <property type="entry name" value="allantoinase"/>
    <property type="match status" value="1"/>
</dbReference>
<dbReference type="NCBIfam" id="NF005960">
    <property type="entry name" value="PRK08044.1"/>
    <property type="match status" value="1"/>
</dbReference>
<dbReference type="PANTHER" id="PTHR43668">
    <property type="entry name" value="ALLANTOINASE"/>
    <property type="match status" value="1"/>
</dbReference>
<dbReference type="PANTHER" id="PTHR43668:SF4">
    <property type="entry name" value="ALLANTOINASE"/>
    <property type="match status" value="1"/>
</dbReference>
<dbReference type="Pfam" id="PF01979">
    <property type="entry name" value="Amidohydro_1"/>
    <property type="match status" value="1"/>
</dbReference>
<dbReference type="SUPFAM" id="SSF51338">
    <property type="entry name" value="Composite domain of metallo-dependent hydrolases"/>
    <property type="match status" value="1"/>
</dbReference>
<dbReference type="SUPFAM" id="SSF51556">
    <property type="entry name" value="Metallo-dependent hydrolases"/>
    <property type="match status" value="1"/>
</dbReference>
<comment type="function">
    <text evidence="1">Catalyzes the conversion of allantoin (5-ureidohydantoin) to allantoic acid by hydrolytic cleavage of the five-member hydantoin ring.</text>
</comment>
<comment type="catalytic activity">
    <reaction evidence="1">
        <text>(S)-allantoin + H2O = allantoate + H(+)</text>
        <dbReference type="Rhea" id="RHEA:17029"/>
        <dbReference type="ChEBI" id="CHEBI:15377"/>
        <dbReference type="ChEBI" id="CHEBI:15378"/>
        <dbReference type="ChEBI" id="CHEBI:15678"/>
        <dbReference type="ChEBI" id="CHEBI:17536"/>
        <dbReference type="EC" id="3.5.2.5"/>
    </reaction>
</comment>
<comment type="cofactor">
    <cofactor evidence="1">
        <name>Zn(2+)</name>
        <dbReference type="ChEBI" id="CHEBI:29105"/>
    </cofactor>
    <text evidence="1">Binds 2 Zn(2+) ions per subunit.</text>
</comment>
<comment type="pathway">
    <text evidence="1">Nitrogen metabolism; (S)-allantoin degradation; allantoate from (S)-allantoin: step 1/1.</text>
</comment>
<comment type="subunit">
    <text evidence="1">Homotetramer.</text>
</comment>
<comment type="PTM">
    <text evidence="1">Carboxylation allows a single lysine to coordinate two zinc ions.</text>
</comment>
<comment type="similarity">
    <text evidence="1">Belongs to the metallo-dependent hydrolases superfamily. Allantoinase family.</text>
</comment>
<evidence type="ECO:0000255" key="1">
    <source>
        <dbReference type="HAMAP-Rule" id="MF_01645"/>
    </source>
</evidence>
<accession>B7UKI9</accession>
<organism>
    <name type="scientific">Escherichia coli O127:H6 (strain E2348/69 / EPEC)</name>
    <dbReference type="NCBI Taxonomy" id="574521"/>
    <lineage>
        <taxon>Bacteria</taxon>
        <taxon>Pseudomonadati</taxon>
        <taxon>Pseudomonadota</taxon>
        <taxon>Gammaproteobacteria</taxon>
        <taxon>Enterobacterales</taxon>
        <taxon>Enterobacteriaceae</taxon>
        <taxon>Escherichia</taxon>
    </lineage>
</organism>
<keyword id="KW-0378">Hydrolase</keyword>
<keyword id="KW-0479">Metal-binding</keyword>
<keyword id="KW-0659">Purine metabolism</keyword>
<keyword id="KW-1185">Reference proteome</keyword>
<keyword id="KW-0862">Zinc</keyword>
<feature type="chain" id="PRO_1000186917" description="Allantoinase">
    <location>
        <begin position="1"/>
        <end position="453"/>
    </location>
</feature>
<feature type="binding site" evidence="1">
    <location>
        <position position="59"/>
    </location>
    <ligand>
        <name>Zn(2+)</name>
        <dbReference type="ChEBI" id="CHEBI:29105"/>
        <label>1</label>
    </ligand>
</feature>
<feature type="binding site" evidence="1">
    <location>
        <position position="61"/>
    </location>
    <ligand>
        <name>Zn(2+)</name>
        <dbReference type="ChEBI" id="CHEBI:29105"/>
        <label>1</label>
    </ligand>
</feature>
<feature type="binding site" description="via carbamate group" evidence="1">
    <location>
        <position position="146"/>
    </location>
    <ligand>
        <name>Zn(2+)</name>
        <dbReference type="ChEBI" id="CHEBI:29105"/>
        <label>1</label>
    </ligand>
</feature>
<feature type="binding site" description="via carbamate group" evidence="1">
    <location>
        <position position="146"/>
    </location>
    <ligand>
        <name>Zn(2+)</name>
        <dbReference type="ChEBI" id="CHEBI:29105"/>
        <label>2</label>
    </ligand>
</feature>
<feature type="binding site" evidence="1">
    <location>
        <position position="186"/>
    </location>
    <ligand>
        <name>Zn(2+)</name>
        <dbReference type="ChEBI" id="CHEBI:29105"/>
        <label>2</label>
    </ligand>
</feature>
<feature type="binding site" evidence="1">
    <location>
        <position position="242"/>
    </location>
    <ligand>
        <name>Zn(2+)</name>
        <dbReference type="ChEBI" id="CHEBI:29105"/>
        <label>2</label>
    </ligand>
</feature>
<feature type="binding site" evidence="1">
    <location>
        <position position="315"/>
    </location>
    <ligand>
        <name>Zn(2+)</name>
        <dbReference type="ChEBI" id="CHEBI:29105"/>
        <label>1</label>
    </ligand>
</feature>
<feature type="modified residue" description="N6-carboxylysine" evidence="1">
    <location>
        <position position="146"/>
    </location>
</feature>
<gene>
    <name evidence="1" type="primary">allB</name>
    <name type="ordered locus">E2348C_0445</name>
</gene>
<proteinExistence type="inferred from homology"/>
<name>ALLB_ECO27</name>